<protein>
    <recommendedName>
        <fullName>Gag polyprotein</fullName>
    </recommendedName>
    <alternativeName>
        <fullName>Core polyprotein</fullName>
    </alternativeName>
    <component>
        <recommendedName>
            <fullName>Matrix protein p15</fullName>
            <shortName>MA</shortName>
        </recommendedName>
    </component>
    <component>
        <recommendedName>
            <fullName>RNA-binding phosphoprotein p12</fullName>
        </recommendedName>
        <alternativeName>
            <fullName>pp12</fullName>
        </alternativeName>
    </component>
    <component>
        <recommendedName>
            <fullName>Capsid protein p30</fullName>
            <shortName>CA</shortName>
        </recommendedName>
    </component>
</protein>
<organismHost>
    <name type="scientific">Felidae</name>
    <name type="common">cat family</name>
    <dbReference type="NCBI Taxonomy" id="9681"/>
</organismHost>
<evidence type="ECO:0000250" key="1"/>
<evidence type="ECO:0000250" key="2">
    <source>
        <dbReference type="UniProtKB" id="P03332"/>
    </source>
</evidence>
<evidence type="ECO:0000250" key="3">
    <source>
        <dbReference type="UniProtKB" id="P03336"/>
    </source>
</evidence>
<evidence type="ECO:0000255" key="4"/>
<evidence type="ECO:0000256" key="5">
    <source>
        <dbReference type="SAM" id="MobiDB-lite"/>
    </source>
</evidence>
<evidence type="ECO:0000305" key="6"/>
<keyword id="KW-0024">Alternative initiation</keyword>
<keyword id="KW-0167">Capsid protein</keyword>
<keyword id="KW-1032">Host cell membrane</keyword>
<keyword id="KW-1043">Host membrane</keyword>
<keyword id="KW-0945">Host-virus interaction</keyword>
<keyword id="KW-0449">Lipoprotein</keyword>
<keyword id="KW-0472">Membrane</keyword>
<keyword id="KW-0519">Myristate</keyword>
<keyword id="KW-0694">RNA-binding</keyword>
<keyword id="KW-1198">Viral budding</keyword>
<keyword id="KW-1187">Viral budding via the host ESCRT complexes</keyword>
<keyword id="KW-0468">Viral matrix protein</keyword>
<keyword id="KW-1188">Viral release from host cell</keyword>
<keyword id="KW-0946">Virion</keyword>
<accession>P03337</accession>
<feature type="initiator methionine" description="Removed; by host" evidence="3">
    <location>
        <position position="1"/>
    </location>
</feature>
<feature type="chain" id="PRO_0000390800" description="Gag polyprotein">
    <location>
        <begin position="2"/>
        <end position="348"/>
    </location>
</feature>
<feature type="chain" id="PRO_0000040844" description="Matrix protein p15" evidence="4">
    <location>
        <begin position="2"/>
        <end position="127"/>
    </location>
</feature>
<feature type="chain" id="PRO_0000040845" description="RNA-binding phosphoprotein p12" evidence="4">
    <location>
        <begin position="128"/>
        <end position="197"/>
    </location>
</feature>
<feature type="chain" id="PRO_0000040846" description="Capsid protein p30" evidence="4">
    <location>
        <begin position="198"/>
        <end position="348"/>
    </location>
</feature>
<feature type="region of interest" description="Disordered" evidence="5">
    <location>
        <begin position="97"/>
        <end position="208"/>
    </location>
</feature>
<feature type="short sequence motif" description="PTAP/PSAP motif">
    <location>
        <begin position="118"/>
        <end position="121"/>
    </location>
</feature>
<feature type="short sequence motif" description="PPXY motif">
    <location>
        <begin position="157"/>
        <end position="160"/>
    </location>
</feature>
<feature type="compositionally biased region" description="Pro residues" evidence="5">
    <location>
        <begin position="100"/>
        <end position="119"/>
    </location>
</feature>
<feature type="compositionally biased region" description="Low complexity" evidence="5">
    <location>
        <begin position="120"/>
        <end position="132"/>
    </location>
</feature>
<feature type="compositionally biased region" description="Pro residues" evidence="5">
    <location>
        <begin position="136"/>
        <end position="146"/>
    </location>
</feature>
<feature type="compositionally biased region" description="Pro residues" evidence="5">
    <location>
        <begin position="156"/>
        <end position="171"/>
    </location>
</feature>
<feature type="site" description="Cleavage; by viral protease" evidence="1">
    <location>
        <begin position="127"/>
        <end position="128"/>
    </location>
</feature>
<feature type="site" description="Cleavage; by viral protease" evidence="1">
    <location>
        <begin position="197"/>
        <end position="198"/>
    </location>
</feature>
<feature type="lipid moiety-binding region" description="N-myristoyl glycine; by host" evidence="1">
    <location>
        <position position="2"/>
    </location>
</feature>
<organism>
    <name type="scientific">Feline sarcoma virus (strain Gardner-Arnstein)</name>
    <name type="common">Ga-FeSV</name>
    <name type="synonym">Gardner-Arnstein feline leukemia oncovirus B</name>
    <dbReference type="NCBI Taxonomy" id="11774"/>
    <lineage>
        <taxon>Viruses</taxon>
        <taxon>Riboviria</taxon>
        <taxon>Pararnavirae</taxon>
        <taxon>Artverviricota</taxon>
        <taxon>Revtraviricetes</taxon>
        <taxon>Ortervirales</taxon>
        <taxon>Retroviridae</taxon>
        <taxon>Orthoretrovirinae</taxon>
        <taxon>Gammaretrovirus</taxon>
    </lineage>
</organism>
<proteinExistence type="inferred from homology"/>
<comment type="function">
    <molecule>Gag polyprotein</molecule>
    <text evidence="2">Plays a role in budding and is processed by the viral protease during virion maturation outside the cell. During budding, it recruits, in a PPXY-dependent or independent manner, Nedd4-like ubiquitin ligases that conjugate ubiquitin molecules to Gag, or to Gag binding host factors. Interaction with HECT ubiquitin ligases probably link the viral protein to the host ESCRT pathway and facilitate release.</text>
</comment>
<comment type="function">
    <molecule>Matrix protein p15</molecule>
    <text evidence="2">Targets Gag and gag-pol polyproteins to the plasma membrane via a multipartite membrane binding signal, that includes its myristoylated N-terminus. Also mediates nuclear localization of the pre-integration complex.</text>
</comment>
<comment type="function">
    <molecule>RNA-binding phosphoprotein p12</molecule>
    <text evidence="2">Constituent of the pre-integration complex (PIC) which tethers the latter to mitotic chromosomes.</text>
</comment>
<comment type="function">
    <molecule>Capsid protein p30</molecule>
    <text evidence="3">Forms the spherical core of the virion that encapsulates the genomic RNA-nucleocapsid complex.</text>
</comment>
<comment type="subunit">
    <molecule>Gag polyprotein</molecule>
    <text evidence="2">Interacts (via PPXY motif) with host NEDD4 (By similarity). Interacts (via PSAP motif) with host TSG101 (By similarity).</text>
</comment>
<comment type="subunit">
    <molecule>Capsid protein p30</molecule>
    <text evidence="2">Homohexamer. Further associates as homomultimer. The virus core is composed of a lattice formed from hexagonal rings, each containing six capsid monomers.</text>
</comment>
<comment type="subcellular location">
    <molecule>Gag polyprotein</molecule>
    <subcellularLocation>
        <location evidence="1">Virion</location>
    </subcellularLocation>
    <subcellularLocation>
        <location evidence="6">Host cell membrane</location>
        <topology evidence="6">Lipid-anchor</topology>
    </subcellularLocation>
</comment>
<comment type="subcellular location">
    <molecule>Matrix protein p15</molecule>
    <subcellularLocation>
        <location evidence="6">Virion</location>
    </subcellularLocation>
</comment>
<comment type="subcellular location">
    <molecule>Capsid protein p30</molecule>
    <subcellularLocation>
        <location evidence="6">Virion</location>
    </subcellularLocation>
</comment>
<comment type="alternative products">
    <event type="alternative initiation"/>
    <isoform>
        <id>P03337-1</id>
        <name>Gag polyprotein</name>
        <sequence type="displayed"/>
    </isoform>
    <isoform>
        <id>P0DOH1-1</id>
        <name>Glyco-Gag protein</name>
        <sequence type="external"/>
    </isoform>
</comment>
<comment type="domain">
    <molecule>Gag polyprotein</molecule>
    <text evidence="2">Late-budding domains (L domains) are short sequence motifs essential for viral particle budding. They recruit proteins of the host ESCRT machinery (Endosomal Sorting Complex Required for Transport) or ESCRT-associated proteins. RNA-binding phosphoprotein p12 contains one L domain: a PPXY motif which potentially interacts with the WW domain 3 of NEDD4 E3 ubiquitin ligase. Matrix protein p15 contains one L domain: a PTAP/PSAP motif, which potentially interacts with the UEV domain of TSG101.</text>
</comment>
<comment type="PTM">
    <molecule>Gag polyprotein</molecule>
    <text evidence="2">Specific enzymatic cleavages by the viral protease yield mature proteins. The protease is released by autocatalytic cleavage. The polyprotein is cleaved during and after budding, this process is termed maturation.</text>
</comment>
<comment type="miscellaneous">
    <text>This protein is synthesized as a Gag-Fes polyprotein.</text>
</comment>
<comment type="sequence caution" evidence="3">
    <conflict type="miscellaneous discrepancy">
        <sequence resource="EMBL-CDS" id="AAA43041"/>
    </conflict>
</comment>
<dbReference type="EMBL" id="J02086">
    <property type="status" value="NOT_ANNOTATED_CDS"/>
    <property type="molecule type" value="Genomic_RNA"/>
</dbReference>
<dbReference type="EMBL" id="J02087">
    <property type="protein sequence ID" value="AAA43041.1"/>
    <property type="status" value="ALT_SEQ"/>
    <property type="molecule type" value="Genomic_RNA"/>
</dbReference>
<dbReference type="PIR" id="A03934">
    <property type="entry name" value="FOMVGC"/>
</dbReference>
<dbReference type="SMR" id="P03337"/>
<dbReference type="GO" id="GO:0020002">
    <property type="term" value="C:host cell plasma membrane"/>
    <property type="evidence" value="ECO:0007669"/>
    <property type="project" value="UniProtKB-SubCell"/>
</dbReference>
<dbReference type="GO" id="GO:0016020">
    <property type="term" value="C:membrane"/>
    <property type="evidence" value="ECO:0007669"/>
    <property type="project" value="UniProtKB-KW"/>
</dbReference>
<dbReference type="GO" id="GO:0019028">
    <property type="term" value="C:viral capsid"/>
    <property type="evidence" value="ECO:0007669"/>
    <property type="project" value="UniProtKB-KW"/>
</dbReference>
<dbReference type="GO" id="GO:0003723">
    <property type="term" value="F:RNA binding"/>
    <property type="evidence" value="ECO:0007669"/>
    <property type="project" value="UniProtKB-KW"/>
</dbReference>
<dbReference type="GO" id="GO:0039660">
    <property type="term" value="F:structural constituent of virion"/>
    <property type="evidence" value="ECO:0007669"/>
    <property type="project" value="UniProtKB-KW"/>
</dbReference>
<dbReference type="GO" id="GO:0039702">
    <property type="term" value="P:viral budding via host ESCRT complex"/>
    <property type="evidence" value="ECO:0007669"/>
    <property type="project" value="UniProtKB-KW"/>
</dbReference>
<dbReference type="Gene3D" id="1.10.150.180">
    <property type="entry name" value="Gamma-retroviral matrix domain"/>
    <property type="match status" value="1"/>
</dbReference>
<dbReference type="Gene3D" id="1.10.375.10">
    <property type="entry name" value="Human Immunodeficiency Virus Type 1 Capsid Protein"/>
    <property type="match status" value="1"/>
</dbReference>
<dbReference type="InterPro" id="IPR000840">
    <property type="entry name" value="G_retro_matrix"/>
</dbReference>
<dbReference type="InterPro" id="IPR036946">
    <property type="entry name" value="G_retro_matrix_sf"/>
</dbReference>
<dbReference type="InterPro" id="IPR002079">
    <property type="entry name" value="Gag_p12"/>
</dbReference>
<dbReference type="InterPro" id="IPR003036">
    <property type="entry name" value="Gag_P30"/>
</dbReference>
<dbReference type="InterPro" id="IPR008919">
    <property type="entry name" value="Retrov_capsid_N"/>
</dbReference>
<dbReference type="InterPro" id="IPR050462">
    <property type="entry name" value="Retroviral_Gag-Pol_poly"/>
</dbReference>
<dbReference type="InterPro" id="IPR010999">
    <property type="entry name" value="Retrovr_matrix"/>
</dbReference>
<dbReference type="PANTHER" id="PTHR33166">
    <property type="entry name" value="GAG_P30 DOMAIN-CONTAINING PROTEIN"/>
    <property type="match status" value="1"/>
</dbReference>
<dbReference type="Pfam" id="PF01140">
    <property type="entry name" value="Gag_MA"/>
    <property type="match status" value="1"/>
</dbReference>
<dbReference type="Pfam" id="PF01141">
    <property type="entry name" value="Gag_p12"/>
    <property type="match status" value="1"/>
</dbReference>
<dbReference type="Pfam" id="PF02093">
    <property type="entry name" value="Gag_p30"/>
    <property type="match status" value="1"/>
</dbReference>
<dbReference type="SUPFAM" id="SSF47836">
    <property type="entry name" value="Retroviral matrix proteins"/>
    <property type="match status" value="1"/>
</dbReference>
<dbReference type="SUPFAM" id="SSF47943">
    <property type="entry name" value="Retrovirus capsid protein, N-terminal core domain"/>
    <property type="match status" value="1"/>
</dbReference>
<gene>
    <name type="primary">gag</name>
</gene>
<reference key="1">
    <citation type="journal article" date="1982" name="Cell">
        <title>Nucleotide sequences of feline retroviral oncogenes (v-fes) provide evidence for a family of tyrosine-specific protein kinase genes.</title>
        <authorList>
            <person name="Hampe A."/>
            <person name="Laprevotte I."/>
            <person name="Galibert F."/>
            <person name="Fedele L.A."/>
            <person name="Sherr C.J."/>
        </authorList>
    </citation>
    <scope>NUCLEOTIDE SEQUENCE [GENOMIC RNA]</scope>
</reference>
<name>GAG_FSVGA</name>
<sequence length="348" mass="38886">MGQTITTPLSLTLDHWSEVRARAHNQGVEVRKKKWITLCEAEWVMMNVGWPREGTFSLDNISQVEKKIFAPGPYGHPDQVPYITTWRSLATDPPSWVRPFLPPPKPPTSLPQPLSPQPSAPLTSSLYPVLPKSDPPKPPVLPPDPSSPLIDLLTEEPPPYPGGHGPPPSGPRTPTASPIASRLRERRENPAEESQALPLREGPNNRPQYWPFSASDLYNWKSHNPPFSQDPVALTNLIESILVTHQPTWDDCQQLLQALLTGEERQRVLLEARKQVPGEDGRPTQLPNVIDETFPLTRPNWDFATPAGREHLRLYRQLLLAGLRGAARRPTNLAQVKQVVQGKEETPA</sequence>